<dbReference type="EMBL" id="BX640429">
    <property type="protein sequence ID" value="CAE37331.1"/>
    <property type="molecule type" value="Genomic_DNA"/>
</dbReference>
<dbReference type="RefSeq" id="WP_003816823.1">
    <property type="nucleotide sequence ID" value="NC_002928.3"/>
</dbReference>
<dbReference type="SMR" id="Q7W8V0"/>
<dbReference type="GeneID" id="93203805"/>
<dbReference type="KEGG" id="bpa:BPP2031"/>
<dbReference type="HOGENOM" id="CLU_068529_2_1_4"/>
<dbReference type="Proteomes" id="UP000001421">
    <property type="component" value="Chromosome"/>
</dbReference>
<dbReference type="GO" id="GO:1990230">
    <property type="term" value="C:iron-sulfur cluster transfer complex"/>
    <property type="evidence" value="ECO:0007669"/>
    <property type="project" value="TreeGrafter"/>
</dbReference>
<dbReference type="GO" id="GO:0001671">
    <property type="term" value="F:ATPase activator activity"/>
    <property type="evidence" value="ECO:0007669"/>
    <property type="project" value="InterPro"/>
</dbReference>
<dbReference type="GO" id="GO:0051087">
    <property type="term" value="F:protein-folding chaperone binding"/>
    <property type="evidence" value="ECO:0007669"/>
    <property type="project" value="InterPro"/>
</dbReference>
<dbReference type="GO" id="GO:0044571">
    <property type="term" value="P:[2Fe-2S] cluster assembly"/>
    <property type="evidence" value="ECO:0007669"/>
    <property type="project" value="InterPro"/>
</dbReference>
<dbReference type="GO" id="GO:0051259">
    <property type="term" value="P:protein complex oligomerization"/>
    <property type="evidence" value="ECO:0007669"/>
    <property type="project" value="InterPro"/>
</dbReference>
<dbReference type="GO" id="GO:0006457">
    <property type="term" value="P:protein folding"/>
    <property type="evidence" value="ECO:0007669"/>
    <property type="project" value="UniProtKB-UniRule"/>
</dbReference>
<dbReference type="CDD" id="cd06257">
    <property type="entry name" value="DnaJ"/>
    <property type="match status" value="1"/>
</dbReference>
<dbReference type="Gene3D" id="1.10.287.110">
    <property type="entry name" value="DnaJ domain"/>
    <property type="match status" value="1"/>
</dbReference>
<dbReference type="Gene3D" id="1.20.1280.20">
    <property type="entry name" value="HscB, C-terminal domain"/>
    <property type="match status" value="1"/>
</dbReference>
<dbReference type="HAMAP" id="MF_00682">
    <property type="entry name" value="HscB"/>
    <property type="match status" value="1"/>
</dbReference>
<dbReference type="InterPro" id="IPR001623">
    <property type="entry name" value="DnaJ_domain"/>
</dbReference>
<dbReference type="InterPro" id="IPR004640">
    <property type="entry name" value="HscB"/>
</dbReference>
<dbReference type="InterPro" id="IPR036386">
    <property type="entry name" value="HscB_C_sf"/>
</dbReference>
<dbReference type="InterPro" id="IPR009073">
    <property type="entry name" value="HscB_oligo_C"/>
</dbReference>
<dbReference type="InterPro" id="IPR036869">
    <property type="entry name" value="J_dom_sf"/>
</dbReference>
<dbReference type="NCBIfam" id="TIGR00714">
    <property type="entry name" value="hscB"/>
    <property type="match status" value="1"/>
</dbReference>
<dbReference type="NCBIfam" id="NF002935">
    <property type="entry name" value="PRK03578.1"/>
    <property type="match status" value="1"/>
</dbReference>
<dbReference type="PANTHER" id="PTHR14021">
    <property type="entry name" value="IRON-SULFUR CLUSTER CO-CHAPERONE PROTEIN HSCB"/>
    <property type="match status" value="1"/>
</dbReference>
<dbReference type="PANTHER" id="PTHR14021:SF15">
    <property type="entry name" value="IRON-SULFUR CLUSTER CO-CHAPERONE PROTEIN HSCB"/>
    <property type="match status" value="1"/>
</dbReference>
<dbReference type="Pfam" id="PF07743">
    <property type="entry name" value="HSCB_C"/>
    <property type="match status" value="1"/>
</dbReference>
<dbReference type="SMART" id="SM00271">
    <property type="entry name" value="DnaJ"/>
    <property type="match status" value="1"/>
</dbReference>
<dbReference type="SUPFAM" id="SSF46565">
    <property type="entry name" value="Chaperone J-domain"/>
    <property type="match status" value="1"/>
</dbReference>
<dbReference type="SUPFAM" id="SSF47144">
    <property type="entry name" value="HSC20 (HSCB), C-terminal oligomerisation domain"/>
    <property type="match status" value="1"/>
</dbReference>
<dbReference type="PROSITE" id="PS50076">
    <property type="entry name" value="DNAJ_2"/>
    <property type="match status" value="1"/>
</dbReference>
<gene>
    <name evidence="1" type="primary">hscB</name>
    <name type="ordered locus">BPP2031</name>
</gene>
<sequence length="170" mass="19533">MAADDHFSLFGLPARFALDPVQLEQAWRAVAARVHPDRYATASAAERRVAMQWAARANEAYRQLRDPMLRARYLCEQAGVDLQTESNTAMDPAFLMQQMEWREMLDDARRDPAAFAALRAELEQARLRMQQTLSELIDERGDYQQAGTKVREWMFVEKLAQELSAAQPMQ</sequence>
<reference key="1">
    <citation type="journal article" date="2003" name="Nat. Genet.">
        <title>Comparative analysis of the genome sequences of Bordetella pertussis, Bordetella parapertussis and Bordetella bronchiseptica.</title>
        <authorList>
            <person name="Parkhill J."/>
            <person name="Sebaihia M."/>
            <person name="Preston A."/>
            <person name="Murphy L.D."/>
            <person name="Thomson N.R."/>
            <person name="Harris D.E."/>
            <person name="Holden M.T.G."/>
            <person name="Churcher C.M."/>
            <person name="Bentley S.D."/>
            <person name="Mungall K.L."/>
            <person name="Cerdeno-Tarraga A.-M."/>
            <person name="Temple L."/>
            <person name="James K.D."/>
            <person name="Harris B."/>
            <person name="Quail M.A."/>
            <person name="Achtman M."/>
            <person name="Atkin R."/>
            <person name="Baker S."/>
            <person name="Basham D."/>
            <person name="Bason N."/>
            <person name="Cherevach I."/>
            <person name="Chillingworth T."/>
            <person name="Collins M."/>
            <person name="Cronin A."/>
            <person name="Davis P."/>
            <person name="Doggett J."/>
            <person name="Feltwell T."/>
            <person name="Goble A."/>
            <person name="Hamlin N."/>
            <person name="Hauser H."/>
            <person name="Holroyd S."/>
            <person name="Jagels K."/>
            <person name="Leather S."/>
            <person name="Moule S."/>
            <person name="Norberczak H."/>
            <person name="O'Neil S."/>
            <person name="Ormond D."/>
            <person name="Price C."/>
            <person name="Rabbinowitsch E."/>
            <person name="Rutter S."/>
            <person name="Sanders M."/>
            <person name="Saunders D."/>
            <person name="Seeger K."/>
            <person name="Sharp S."/>
            <person name="Simmonds M."/>
            <person name="Skelton J."/>
            <person name="Squares R."/>
            <person name="Squares S."/>
            <person name="Stevens K."/>
            <person name="Unwin L."/>
            <person name="Whitehead S."/>
            <person name="Barrell B.G."/>
            <person name="Maskell D.J."/>
        </authorList>
    </citation>
    <scope>NUCLEOTIDE SEQUENCE [LARGE SCALE GENOMIC DNA]</scope>
    <source>
        <strain>12822 / ATCC BAA-587 / NCTC 13253</strain>
    </source>
</reference>
<accession>Q7W8V0</accession>
<organism>
    <name type="scientific">Bordetella parapertussis (strain 12822 / ATCC BAA-587 / NCTC 13253)</name>
    <dbReference type="NCBI Taxonomy" id="257311"/>
    <lineage>
        <taxon>Bacteria</taxon>
        <taxon>Pseudomonadati</taxon>
        <taxon>Pseudomonadota</taxon>
        <taxon>Betaproteobacteria</taxon>
        <taxon>Burkholderiales</taxon>
        <taxon>Alcaligenaceae</taxon>
        <taxon>Bordetella</taxon>
    </lineage>
</organism>
<protein>
    <recommendedName>
        <fullName evidence="1">Co-chaperone protein HscB homolog</fullName>
    </recommendedName>
</protein>
<feature type="chain" id="PRO_0000070958" description="Co-chaperone protein HscB homolog">
    <location>
        <begin position="1"/>
        <end position="170"/>
    </location>
</feature>
<feature type="domain" description="J" evidence="1">
    <location>
        <begin position="5"/>
        <end position="79"/>
    </location>
</feature>
<keyword id="KW-0143">Chaperone</keyword>
<comment type="function">
    <text evidence="1">Co-chaperone involved in the maturation of iron-sulfur cluster-containing proteins. Seems to help targeting proteins to be folded toward HscA.</text>
</comment>
<comment type="subunit">
    <text evidence="1">Interacts with HscA and stimulates its ATPase activity.</text>
</comment>
<comment type="similarity">
    <text evidence="1">Belongs to the HscB family.</text>
</comment>
<evidence type="ECO:0000255" key="1">
    <source>
        <dbReference type="HAMAP-Rule" id="MF_00682"/>
    </source>
</evidence>
<name>HSCB_BORPA</name>
<proteinExistence type="inferred from homology"/>